<organism>
    <name type="scientific">Helicobacter pylori (strain 52)</name>
    <dbReference type="NCBI Taxonomy" id="684950"/>
    <lineage>
        <taxon>Bacteria</taxon>
        <taxon>Pseudomonadati</taxon>
        <taxon>Campylobacterota</taxon>
        <taxon>Epsilonproteobacteria</taxon>
        <taxon>Campylobacterales</taxon>
        <taxon>Helicobacteraceae</taxon>
        <taxon>Helicobacter</taxon>
    </lineage>
</organism>
<accession>D0K261</accession>
<name>CCOP_HELP5</name>
<comment type="function">
    <text evidence="1 2 4">C-type cytochrome. Part of the cbb3-type cytochrome c oxidase complex. CcoP subunit is required for transferring electrons from donor cytochrome c via its heme groups to CcoO subunit. From there, electrons are shuttled to the catalytic binuclear center of CcoN subunit where oxygen reduction takes place. The complex also functions as a proton pump (By similarity).</text>
</comment>
<comment type="cofactor">
    <cofactor evidence="2">
        <name>heme c</name>
        <dbReference type="ChEBI" id="CHEBI:61717"/>
    </cofactor>
    <text evidence="2">Binds 2 heme C groups per subunit.</text>
</comment>
<comment type="pathway">
    <text evidence="1">Energy metabolism; oxidative phosphorylation.</text>
</comment>
<comment type="subunit">
    <text evidence="1">Component of the cbb3-type cytochrome c oxidase at least composed of CcoN, CcoO, CcoQ and CcoP.</text>
</comment>
<comment type="subcellular location">
    <subcellularLocation>
        <location evidence="6 7">Cell inner membrane</location>
        <topology evidence="6 7">Multi-pass membrane protein</topology>
    </subcellularLocation>
</comment>
<comment type="similarity">
    <text evidence="9">Belongs to the CcoP / FixP family.</text>
</comment>
<sequence length="292" mass="32549">MDFLNDHINVFGLIAALVILVLTIYESSSLIKEMRDSKSQGELMENGHLIDGIGEFANNVPVGWIASFMCTIVWAFWYFFFGYPLNSFSQIGQYNEEVKAHNQKFEAKWKNLGQKELVDMGQGIFLVHCSQCHGITAEGLHGSAQNLVRWGKEEGIMDTIKHGSKGMDYLAGEMPAMELDEKDAKAIASYVMAEISSVKKTKNPQLIDKGKELFESMGCTGCHGNDGKGLQENQVFAADLTAYGTENFLRNILTHGKKGNIGHMPSFKYKNFSDLQVKALAEFIQSLKPLED</sequence>
<keyword id="KW-0997">Cell inner membrane</keyword>
<keyword id="KW-1003">Cell membrane</keyword>
<keyword id="KW-0249">Electron transport</keyword>
<keyword id="KW-0349">Heme</keyword>
<keyword id="KW-0375">Hydrogen ion transport</keyword>
<keyword id="KW-0406">Ion transport</keyword>
<keyword id="KW-0408">Iron</keyword>
<keyword id="KW-0472">Membrane</keyword>
<keyword id="KW-0479">Metal-binding</keyword>
<keyword id="KW-0560">Oxidoreductase</keyword>
<keyword id="KW-0677">Repeat</keyword>
<keyword id="KW-0679">Respiratory chain</keyword>
<keyword id="KW-0812">Transmembrane</keyword>
<keyword id="KW-1133">Transmembrane helix</keyword>
<keyword id="KW-0813">Transport</keyword>
<proteinExistence type="inferred from homology"/>
<evidence type="ECO:0000250" key="1">
    <source>
        <dbReference type="UniProtKB" id="D5ARP7"/>
    </source>
</evidence>
<evidence type="ECO:0000250" key="2">
    <source>
        <dbReference type="UniProtKB" id="D9IA45"/>
    </source>
</evidence>
<evidence type="ECO:0000250" key="3">
    <source>
        <dbReference type="UniProtKB" id="O87196"/>
    </source>
</evidence>
<evidence type="ECO:0000250" key="4">
    <source>
        <dbReference type="UniProtKB" id="Q3J015"/>
    </source>
</evidence>
<evidence type="ECO:0000250" key="5">
    <source>
        <dbReference type="UniProtKB" id="Q52689"/>
    </source>
</evidence>
<evidence type="ECO:0000250" key="6">
    <source>
        <dbReference type="UniProtKB" id="Q8KS19"/>
    </source>
</evidence>
<evidence type="ECO:0000255" key="7"/>
<evidence type="ECO:0000255" key="8">
    <source>
        <dbReference type="PROSITE-ProRule" id="PRU00433"/>
    </source>
</evidence>
<evidence type="ECO:0000305" key="9"/>
<evidence type="ECO:0000312" key="10">
    <source>
        <dbReference type="EMBL" id="ACX98776.1"/>
    </source>
</evidence>
<protein>
    <recommendedName>
        <fullName evidence="1">Cbb3-type cytochrome c oxidase subunit CcoP</fullName>
        <shortName evidence="1">Cbb3-Cox subunit CcoP</shortName>
    </recommendedName>
    <alternativeName>
        <fullName evidence="5">C-type cytochrome CcoP</fullName>
        <shortName evidence="1">Cyt c(P)</shortName>
    </alternativeName>
    <alternativeName>
        <fullName evidence="1">Cytochrome c oxidase subunit III</fullName>
    </alternativeName>
</protein>
<gene>
    <name evidence="3" type="primary">ccoP</name>
    <name type="ordered locus">HPKB_0155</name>
</gene>
<feature type="chain" id="PRO_0000412286" description="Cbb3-type cytochrome c oxidase subunit CcoP">
    <location>
        <begin position="1"/>
        <end position="292"/>
    </location>
</feature>
<feature type="transmembrane region" description="Helical" evidence="7">
    <location>
        <begin position="11"/>
        <end position="31"/>
    </location>
</feature>
<feature type="transmembrane region" description="Helical" evidence="7">
    <location>
        <begin position="62"/>
        <end position="82"/>
    </location>
</feature>
<feature type="domain" description="Cytochrome c 1" evidence="8">
    <location>
        <begin position="116"/>
        <end position="195"/>
    </location>
</feature>
<feature type="domain" description="Cytochrome c 2" evidence="8">
    <location>
        <begin position="205"/>
        <end position="288"/>
    </location>
</feature>
<feature type="binding site" description="covalent" evidence="2">
    <location>
        <position position="129"/>
    </location>
    <ligand>
        <name>heme c</name>
        <dbReference type="ChEBI" id="CHEBI:61717"/>
        <label>1</label>
    </ligand>
</feature>
<feature type="binding site" description="covalent" evidence="2">
    <location>
        <position position="132"/>
    </location>
    <ligand>
        <name>heme c</name>
        <dbReference type="ChEBI" id="CHEBI:61717"/>
        <label>1</label>
    </ligand>
</feature>
<feature type="binding site" description="axial binding residue" evidence="2">
    <location>
        <position position="133"/>
    </location>
    <ligand>
        <name>heme c</name>
        <dbReference type="ChEBI" id="CHEBI:61717"/>
        <label>1</label>
    </ligand>
    <ligandPart>
        <name>Fe</name>
        <dbReference type="ChEBI" id="CHEBI:18248"/>
    </ligandPart>
</feature>
<feature type="binding site" description="axial binding residue" evidence="2">
    <location>
        <position position="174"/>
    </location>
    <ligand>
        <name>heme c</name>
        <dbReference type="ChEBI" id="CHEBI:61717"/>
        <label>2</label>
    </ligand>
    <ligandPart>
        <name>Fe</name>
        <dbReference type="ChEBI" id="CHEBI:18248"/>
    </ligandPart>
</feature>
<feature type="binding site" description="covalent" evidence="2">
    <location>
        <position position="219"/>
    </location>
    <ligand>
        <name>heme c</name>
        <dbReference type="ChEBI" id="CHEBI:61717"/>
        <label>2</label>
    </ligand>
</feature>
<feature type="binding site" description="covalent" evidence="2">
    <location>
        <position position="222"/>
    </location>
    <ligand>
        <name>heme c</name>
        <dbReference type="ChEBI" id="CHEBI:61717"/>
        <label>2</label>
    </ligand>
</feature>
<feature type="binding site" description="axial binding residue" evidence="2">
    <location>
        <position position="223"/>
    </location>
    <ligand>
        <name>heme c</name>
        <dbReference type="ChEBI" id="CHEBI:61717"/>
        <label>2</label>
    </ligand>
    <ligandPart>
        <name>Fe</name>
        <dbReference type="ChEBI" id="CHEBI:18248"/>
    </ligandPart>
</feature>
<feature type="binding site" description="axial binding residue" evidence="2">
    <location>
        <position position="264"/>
    </location>
    <ligand>
        <name>heme c</name>
        <dbReference type="ChEBI" id="CHEBI:61717"/>
        <label>1</label>
    </ligand>
    <ligandPart>
        <name>Fe</name>
        <dbReference type="ChEBI" id="CHEBI:18248"/>
    </ligandPart>
</feature>
<dbReference type="EMBL" id="CP001680">
    <property type="protein sequence ID" value="ACX98776.1"/>
    <property type="molecule type" value="Genomic_DNA"/>
</dbReference>
<dbReference type="RefSeq" id="WP_000346842.1">
    <property type="nucleotide sequence ID" value="NC_017354.1"/>
</dbReference>
<dbReference type="SMR" id="D0K261"/>
<dbReference type="KEGG" id="hpz:HPKB_0155"/>
<dbReference type="PATRIC" id="fig|684950.4.peg.169"/>
<dbReference type="HOGENOM" id="CLU_986691_0_0_7"/>
<dbReference type="UniPathway" id="UPA00705"/>
<dbReference type="GO" id="GO:0005886">
    <property type="term" value="C:plasma membrane"/>
    <property type="evidence" value="ECO:0007669"/>
    <property type="project" value="UniProtKB-SubCell"/>
</dbReference>
<dbReference type="GO" id="GO:0009055">
    <property type="term" value="F:electron transfer activity"/>
    <property type="evidence" value="ECO:0007669"/>
    <property type="project" value="InterPro"/>
</dbReference>
<dbReference type="GO" id="GO:0020037">
    <property type="term" value="F:heme binding"/>
    <property type="evidence" value="ECO:0007669"/>
    <property type="project" value="InterPro"/>
</dbReference>
<dbReference type="GO" id="GO:0046872">
    <property type="term" value="F:metal ion binding"/>
    <property type="evidence" value="ECO:0007669"/>
    <property type="project" value="UniProtKB-KW"/>
</dbReference>
<dbReference type="GO" id="GO:0016491">
    <property type="term" value="F:oxidoreductase activity"/>
    <property type="evidence" value="ECO:0007669"/>
    <property type="project" value="UniProtKB-KW"/>
</dbReference>
<dbReference type="GO" id="GO:0006119">
    <property type="term" value="P:oxidative phosphorylation"/>
    <property type="evidence" value="ECO:0007669"/>
    <property type="project" value="UniProtKB-UniPathway"/>
</dbReference>
<dbReference type="GO" id="GO:1902600">
    <property type="term" value="P:proton transmembrane transport"/>
    <property type="evidence" value="ECO:0007669"/>
    <property type="project" value="UniProtKB-KW"/>
</dbReference>
<dbReference type="Gene3D" id="6.10.280.130">
    <property type="match status" value="1"/>
</dbReference>
<dbReference type="Gene3D" id="1.10.760.10">
    <property type="entry name" value="Cytochrome c-like domain"/>
    <property type="match status" value="2"/>
</dbReference>
<dbReference type="InterPro" id="IPR032858">
    <property type="entry name" value="CcoP_N"/>
</dbReference>
<dbReference type="InterPro" id="IPR038414">
    <property type="entry name" value="CcoP_N_sf"/>
</dbReference>
<dbReference type="InterPro" id="IPR009056">
    <property type="entry name" value="Cyt_c-like_dom"/>
</dbReference>
<dbReference type="InterPro" id="IPR036909">
    <property type="entry name" value="Cyt_c-like_dom_sf"/>
</dbReference>
<dbReference type="InterPro" id="IPR004678">
    <property type="entry name" value="Cyt_c_oxidase_cbb3_su3"/>
</dbReference>
<dbReference type="InterPro" id="IPR050597">
    <property type="entry name" value="Cytochrome_c_Oxidase_Subunit"/>
</dbReference>
<dbReference type="NCBIfam" id="TIGR00782">
    <property type="entry name" value="ccoP"/>
    <property type="match status" value="1"/>
</dbReference>
<dbReference type="PANTHER" id="PTHR33751">
    <property type="entry name" value="CBB3-TYPE CYTOCHROME C OXIDASE SUBUNIT FIXP"/>
    <property type="match status" value="1"/>
</dbReference>
<dbReference type="PANTHER" id="PTHR33751:SF1">
    <property type="entry name" value="CBB3-TYPE CYTOCHROME C OXIDASE SUBUNIT FIXP"/>
    <property type="match status" value="1"/>
</dbReference>
<dbReference type="Pfam" id="PF13442">
    <property type="entry name" value="Cytochrome_CBB3"/>
    <property type="match status" value="2"/>
</dbReference>
<dbReference type="Pfam" id="PF14715">
    <property type="entry name" value="FixP_N"/>
    <property type="match status" value="1"/>
</dbReference>
<dbReference type="PIRSF" id="PIRSF000006">
    <property type="entry name" value="Cbb3-Cox_fixP"/>
    <property type="match status" value="1"/>
</dbReference>
<dbReference type="SUPFAM" id="SSF46626">
    <property type="entry name" value="Cytochrome c"/>
    <property type="match status" value="2"/>
</dbReference>
<dbReference type="PROSITE" id="PS51007">
    <property type="entry name" value="CYTC"/>
    <property type="match status" value="2"/>
</dbReference>
<reference evidence="10" key="1">
    <citation type="submission" date="2009-07" db="EMBL/GenBank/DDBJ databases">
        <title>Genome sequence of Helicobacter pylori strain 52.</title>
        <authorList>
            <person name="Kim S."/>
            <person name="Lee W.K."/>
            <person name="Choi S.H."/>
            <person name="Kang S."/>
            <person name="Park H.S."/>
            <person name="Kim Y.S."/>
            <person name="Lee S.G."/>
            <person name="Byun E.Y."/>
            <person name="Jeong J.E."/>
            <person name="Park Y.H."/>
            <person name="Lee E.J."/>
            <person name="Kim J.S."/>
            <person name="Ryu B.D."/>
            <person name="Lee Y.S."/>
            <person name="Hahn Y."/>
            <person name="Yeom Y.I."/>
            <person name="Park S.G."/>
            <person name="Youn H.S."/>
            <person name="Ko G.H."/>
            <person name="Choi M.B."/>
            <person name="Park C.H."/>
            <person name="Lim J.Y."/>
            <person name="Bae D.W."/>
            <person name="Song J.Y."/>
            <person name="Park J.U."/>
            <person name="Kang H.L."/>
            <person name="Baik S.C."/>
            <person name="Cho M.J."/>
            <person name="Yoo H.S."/>
            <person name="Rhee K.H."/>
        </authorList>
    </citation>
    <scope>NUCLEOTIDE SEQUENCE [LARGE SCALE GENOMIC DNA]</scope>
    <source>
        <strain>52</strain>
    </source>
</reference>